<protein>
    <recommendedName>
        <fullName evidence="1">L-cystine transport system permease protein TcyL</fullName>
    </recommendedName>
</protein>
<feature type="chain" id="PRO_0000060252" description="L-cystine transport system permease protein TcyL">
    <location>
        <begin position="1"/>
        <end position="222"/>
    </location>
</feature>
<feature type="topological domain" description="Periplasmic" evidence="4">
    <location>
        <begin position="1"/>
        <end position="22"/>
    </location>
</feature>
<feature type="transmembrane region" description="Helical" evidence="2">
    <location>
        <begin position="23"/>
        <end position="43"/>
    </location>
</feature>
<feature type="topological domain" description="Cytoplasmic" evidence="4">
    <location>
        <begin position="44"/>
        <end position="64"/>
    </location>
</feature>
<feature type="transmembrane region" description="Helical" evidence="2">
    <location>
        <begin position="65"/>
        <end position="85"/>
    </location>
</feature>
<feature type="topological domain" description="Periplasmic" evidence="4">
    <location>
        <begin position="86"/>
        <end position="182"/>
    </location>
</feature>
<feature type="transmembrane region" description="Helical" evidence="2">
    <location>
        <begin position="183"/>
        <end position="203"/>
    </location>
</feature>
<feature type="topological domain" description="Cytoplasmic" evidence="4">
    <location>
        <begin position="204"/>
        <end position="222"/>
    </location>
</feature>
<feature type="domain" description="ABC transmembrane type-1" evidence="3">
    <location>
        <begin position="19"/>
        <end position="207"/>
    </location>
</feature>
<accession>P0AFT4</accession>
<accession>O07985</accession>
<accession>P76315</accession>
<name>TCYL_SHIFL</name>
<sequence>MQESIQLVIDSLPFLLKGAGYTLQLSIGGMFFGLLLGFILALMRLSPIWPVRWLARFYISIFRGTPLIAQLFMIYYGLPQFGIELDPIPSAMIGLSLNTAAYAAETLRAAISSIDKGQWEAAASIGMTPWQTMRRAILPQAARVALPPLSNSFISLVKDTSLAATIQVPELFRQAQLITSRTLEVFTMYLAASLIYWIMATVLSTLQNHFENQLNRQEREPK</sequence>
<comment type="function">
    <text evidence="1">Part of the ABC transporter complex TcyJLN involved in L-cystine import. Responsible for the translocation of the substrate across the membrane.</text>
</comment>
<comment type="subunit">
    <text evidence="1">The complex is composed of two ATP-binding proteins (TcyN), two transmembrane proteins (TcyL) and a solute-binding protein (TcyJ).</text>
</comment>
<comment type="subcellular location">
    <subcellularLocation>
        <location evidence="1">Cell inner membrane</location>
        <topology evidence="2">Multi-pass membrane protein</topology>
    </subcellularLocation>
</comment>
<comment type="similarity">
    <text evidence="4">Belongs to the binding-protein-dependent transport system permease family. HisMQ subfamily.</text>
</comment>
<evidence type="ECO:0000250" key="1">
    <source>
        <dbReference type="UniProtKB" id="P0AFT2"/>
    </source>
</evidence>
<evidence type="ECO:0000255" key="2"/>
<evidence type="ECO:0000255" key="3">
    <source>
        <dbReference type="PROSITE-ProRule" id="PRU00441"/>
    </source>
</evidence>
<evidence type="ECO:0000305" key="4"/>
<gene>
    <name evidence="1" type="primary">tcyL</name>
    <name type="synonym">yecS</name>
    <name type="ordered locus">SF1961</name>
    <name type="ordered locus">S2057</name>
</gene>
<keyword id="KW-0029">Amino-acid transport</keyword>
<keyword id="KW-0997">Cell inner membrane</keyword>
<keyword id="KW-1003">Cell membrane</keyword>
<keyword id="KW-0472">Membrane</keyword>
<keyword id="KW-1185">Reference proteome</keyword>
<keyword id="KW-0812">Transmembrane</keyword>
<keyword id="KW-1133">Transmembrane helix</keyword>
<keyword id="KW-0813">Transport</keyword>
<dbReference type="EMBL" id="AE005674">
    <property type="protein sequence ID" value="AAN43512.1"/>
    <property type="molecule type" value="Genomic_DNA"/>
</dbReference>
<dbReference type="EMBL" id="AE014073">
    <property type="protein sequence ID" value="AAP17342.1"/>
    <property type="molecule type" value="Genomic_DNA"/>
</dbReference>
<dbReference type="RefSeq" id="NP_707805.1">
    <property type="nucleotide sequence ID" value="NC_004337.2"/>
</dbReference>
<dbReference type="RefSeq" id="WP_001158220.1">
    <property type="nucleotide sequence ID" value="NZ_WPGW01000033.1"/>
</dbReference>
<dbReference type="SMR" id="P0AFT4"/>
<dbReference type="STRING" id="198214.SF1961"/>
<dbReference type="PaxDb" id="198214-SF1961"/>
<dbReference type="GeneID" id="1025176"/>
<dbReference type="GeneID" id="93776224"/>
<dbReference type="KEGG" id="sfl:SF1961"/>
<dbReference type="KEGG" id="sfx:S2057"/>
<dbReference type="PATRIC" id="fig|198214.7.peg.2341"/>
<dbReference type="HOGENOM" id="CLU_019602_1_4_6"/>
<dbReference type="Proteomes" id="UP000001006">
    <property type="component" value="Chromosome"/>
</dbReference>
<dbReference type="Proteomes" id="UP000002673">
    <property type="component" value="Chromosome"/>
</dbReference>
<dbReference type="GO" id="GO:0043190">
    <property type="term" value="C:ATP-binding cassette (ABC) transporter complex"/>
    <property type="evidence" value="ECO:0007669"/>
    <property type="project" value="InterPro"/>
</dbReference>
<dbReference type="GO" id="GO:0015184">
    <property type="term" value="F:L-cystine transmembrane transporter activity"/>
    <property type="evidence" value="ECO:0007669"/>
    <property type="project" value="TreeGrafter"/>
</dbReference>
<dbReference type="CDD" id="cd06261">
    <property type="entry name" value="TM_PBP2"/>
    <property type="match status" value="1"/>
</dbReference>
<dbReference type="FunFam" id="1.10.3720.10:FF:000009">
    <property type="entry name" value="Amino acid ABC transporter permease"/>
    <property type="match status" value="1"/>
</dbReference>
<dbReference type="Gene3D" id="1.10.3720.10">
    <property type="entry name" value="MetI-like"/>
    <property type="match status" value="1"/>
</dbReference>
<dbReference type="InterPro" id="IPR010065">
    <property type="entry name" value="AA_ABC_transptr_permease_3TM"/>
</dbReference>
<dbReference type="InterPro" id="IPR043429">
    <property type="entry name" value="ArtM/GltK/GlnP/TcyL/YhdX-like"/>
</dbReference>
<dbReference type="InterPro" id="IPR000515">
    <property type="entry name" value="MetI-like"/>
</dbReference>
<dbReference type="InterPro" id="IPR035906">
    <property type="entry name" value="MetI-like_sf"/>
</dbReference>
<dbReference type="NCBIfam" id="TIGR01726">
    <property type="entry name" value="HEQRo_perm_3TM"/>
    <property type="match status" value="1"/>
</dbReference>
<dbReference type="NCBIfam" id="NF011680">
    <property type="entry name" value="PRK15100.1"/>
    <property type="match status" value="1"/>
</dbReference>
<dbReference type="PANTHER" id="PTHR30614:SF0">
    <property type="entry name" value="L-CYSTINE TRANSPORT SYSTEM PERMEASE PROTEIN TCYL"/>
    <property type="match status" value="1"/>
</dbReference>
<dbReference type="PANTHER" id="PTHR30614">
    <property type="entry name" value="MEMBRANE COMPONENT OF AMINO ACID ABC TRANSPORTER"/>
    <property type="match status" value="1"/>
</dbReference>
<dbReference type="Pfam" id="PF00528">
    <property type="entry name" value="BPD_transp_1"/>
    <property type="match status" value="1"/>
</dbReference>
<dbReference type="SUPFAM" id="SSF161098">
    <property type="entry name" value="MetI-like"/>
    <property type="match status" value="1"/>
</dbReference>
<dbReference type="PROSITE" id="PS50928">
    <property type="entry name" value="ABC_TM1"/>
    <property type="match status" value="1"/>
</dbReference>
<proteinExistence type="inferred from homology"/>
<reference key="1">
    <citation type="journal article" date="2002" name="Nucleic Acids Res.">
        <title>Genome sequence of Shigella flexneri 2a: insights into pathogenicity through comparison with genomes of Escherichia coli K12 and O157.</title>
        <authorList>
            <person name="Jin Q."/>
            <person name="Yuan Z."/>
            <person name="Xu J."/>
            <person name="Wang Y."/>
            <person name="Shen Y."/>
            <person name="Lu W."/>
            <person name="Wang J."/>
            <person name="Liu H."/>
            <person name="Yang J."/>
            <person name="Yang F."/>
            <person name="Zhang X."/>
            <person name="Zhang J."/>
            <person name="Yang G."/>
            <person name="Wu H."/>
            <person name="Qu D."/>
            <person name="Dong J."/>
            <person name="Sun L."/>
            <person name="Xue Y."/>
            <person name="Zhao A."/>
            <person name="Gao Y."/>
            <person name="Zhu J."/>
            <person name="Kan B."/>
            <person name="Ding K."/>
            <person name="Chen S."/>
            <person name="Cheng H."/>
            <person name="Yao Z."/>
            <person name="He B."/>
            <person name="Chen R."/>
            <person name="Ma D."/>
            <person name="Qiang B."/>
            <person name="Wen Y."/>
            <person name="Hou Y."/>
            <person name="Yu J."/>
        </authorList>
    </citation>
    <scope>NUCLEOTIDE SEQUENCE [LARGE SCALE GENOMIC DNA]</scope>
    <source>
        <strain>301 / Serotype 2a</strain>
    </source>
</reference>
<reference key="2">
    <citation type="journal article" date="2003" name="Infect. Immun.">
        <title>Complete genome sequence and comparative genomics of Shigella flexneri serotype 2a strain 2457T.</title>
        <authorList>
            <person name="Wei J."/>
            <person name="Goldberg M.B."/>
            <person name="Burland V."/>
            <person name="Venkatesan M.M."/>
            <person name="Deng W."/>
            <person name="Fournier G."/>
            <person name="Mayhew G.F."/>
            <person name="Plunkett G. III"/>
            <person name="Rose D.J."/>
            <person name="Darling A."/>
            <person name="Mau B."/>
            <person name="Perna N.T."/>
            <person name="Payne S.M."/>
            <person name="Runyen-Janecky L.J."/>
            <person name="Zhou S."/>
            <person name="Schwartz D.C."/>
            <person name="Blattner F.R."/>
        </authorList>
    </citation>
    <scope>NUCLEOTIDE SEQUENCE [LARGE SCALE GENOMIC DNA]</scope>
    <source>
        <strain>ATCC 700930 / 2457T / Serotype 2a</strain>
    </source>
</reference>
<organism>
    <name type="scientific">Shigella flexneri</name>
    <dbReference type="NCBI Taxonomy" id="623"/>
    <lineage>
        <taxon>Bacteria</taxon>
        <taxon>Pseudomonadati</taxon>
        <taxon>Pseudomonadota</taxon>
        <taxon>Gammaproteobacteria</taxon>
        <taxon>Enterobacterales</taxon>
        <taxon>Enterobacteriaceae</taxon>
        <taxon>Shigella</taxon>
    </lineage>
</organism>